<comment type="function">
    <text evidence="1">One of the early assembly proteins it binds 23S rRNA. One of the proteins that surrounds the polypeptide exit tunnel on the outside of the ribosome. Forms the main docking site for trigger factor binding to the ribosome.</text>
</comment>
<comment type="subunit">
    <text evidence="1">Part of the 50S ribosomal subunit. Contacts protein L29, and trigger factor when it is bound to the ribosome.</text>
</comment>
<comment type="similarity">
    <text evidence="1">Belongs to the universal ribosomal protein uL23 family.</text>
</comment>
<evidence type="ECO:0000255" key="1">
    <source>
        <dbReference type="HAMAP-Rule" id="MF_01369"/>
    </source>
</evidence>
<evidence type="ECO:0000305" key="2"/>
<accession>Q3B6F9</accession>
<keyword id="KW-1185">Reference proteome</keyword>
<keyword id="KW-0687">Ribonucleoprotein</keyword>
<keyword id="KW-0689">Ribosomal protein</keyword>
<keyword id="KW-0694">RNA-binding</keyword>
<keyword id="KW-0699">rRNA-binding</keyword>
<protein>
    <recommendedName>
        <fullName evidence="1">Large ribosomal subunit protein uL23</fullName>
    </recommendedName>
    <alternativeName>
        <fullName evidence="2">50S ribosomal protein L23</fullName>
    </alternativeName>
</protein>
<dbReference type="EMBL" id="CP000096">
    <property type="protein sequence ID" value="ABB23072.1"/>
    <property type="molecule type" value="Genomic_DNA"/>
</dbReference>
<dbReference type="RefSeq" id="WP_011356948.1">
    <property type="nucleotide sequence ID" value="NC_007512.1"/>
</dbReference>
<dbReference type="SMR" id="Q3B6F9"/>
<dbReference type="STRING" id="319225.Plut_0182"/>
<dbReference type="KEGG" id="plt:Plut_0182"/>
<dbReference type="eggNOG" id="COG0089">
    <property type="taxonomic scope" value="Bacteria"/>
</dbReference>
<dbReference type="HOGENOM" id="CLU_037562_3_0_10"/>
<dbReference type="OrthoDB" id="9797862at2"/>
<dbReference type="Proteomes" id="UP000002709">
    <property type="component" value="Chromosome"/>
</dbReference>
<dbReference type="GO" id="GO:1990904">
    <property type="term" value="C:ribonucleoprotein complex"/>
    <property type="evidence" value="ECO:0007669"/>
    <property type="project" value="UniProtKB-KW"/>
</dbReference>
<dbReference type="GO" id="GO:0005840">
    <property type="term" value="C:ribosome"/>
    <property type="evidence" value="ECO:0007669"/>
    <property type="project" value="UniProtKB-KW"/>
</dbReference>
<dbReference type="GO" id="GO:0019843">
    <property type="term" value="F:rRNA binding"/>
    <property type="evidence" value="ECO:0007669"/>
    <property type="project" value="UniProtKB-UniRule"/>
</dbReference>
<dbReference type="GO" id="GO:0003735">
    <property type="term" value="F:structural constituent of ribosome"/>
    <property type="evidence" value="ECO:0007669"/>
    <property type="project" value="InterPro"/>
</dbReference>
<dbReference type="GO" id="GO:0006412">
    <property type="term" value="P:translation"/>
    <property type="evidence" value="ECO:0007669"/>
    <property type="project" value="UniProtKB-UniRule"/>
</dbReference>
<dbReference type="FunFam" id="3.30.70.330:FF:000001">
    <property type="entry name" value="50S ribosomal protein L23"/>
    <property type="match status" value="1"/>
</dbReference>
<dbReference type="Gene3D" id="3.30.70.330">
    <property type="match status" value="1"/>
</dbReference>
<dbReference type="HAMAP" id="MF_01369_B">
    <property type="entry name" value="Ribosomal_uL23_B"/>
    <property type="match status" value="1"/>
</dbReference>
<dbReference type="InterPro" id="IPR012677">
    <property type="entry name" value="Nucleotide-bd_a/b_plait_sf"/>
</dbReference>
<dbReference type="InterPro" id="IPR013025">
    <property type="entry name" value="Ribosomal_uL23-like"/>
</dbReference>
<dbReference type="InterPro" id="IPR012678">
    <property type="entry name" value="Ribosomal_uL23/eL15/eS24_sf"/>
</dbReference>
<dbReference type="NCBIfam" id="NF004359">
    <property type="entry name" value="PRK05738.1-3"/>
    <property type="match status" value="1"/>
</dbReference>
<dbReference type="NCBIfam" id="NF004363">
    <property type="entry name" value="PRK05738.2-4"/>
    <property type="match status" value="1"/>
</dbReference>
<dbReference type="PANTHER" id="PTHR12059:SF5">
    <property type="entry name" value="LARGE RIBOSOMAL SUBUNIT PROTEIN UL23M"/>
    <property type="match status" value="1"/>
</dbReference>
<dbReference type="PANTHER" id="PTHR12059">
    <property type="entry name" value="RIBOSOMAL PROTEIN L23-RELATED"/>
    <property type="match status" value="1"/>
</dbReference>
<dbReference type="Pfam" id="PF00276">
    <property type="entry name" value="Ribosomal_L23"/>
    <property type="match status" value="1"/>
</dbReference>
<dbReference type="SUPFAM" id="SSF54189">
    <property type="entry name" value="Ribosomal proteins S24e, L23 and L15e"/>
    <property type="match status" value="1"/>
</dbReference>
<feature type="chain" id="PRO_0000272792" description="Large ribosomal subunit protein uL23">
    <location>
        <begin position="1"/>
        <end position="103"/>
    </location>
</feature>
<reference key="1">
    <citation type="submission" date="2005-08" db="EMBL/GenBank/DDBJ databases">
        <title>Complete sequence of Pelodictyon luteolum DSM 273.</title>
        <authorList>
            <consortium name="US DOE Joint Genome Institute"/>
            <person name="Copeland A."/>
            <person name="Lucas S."/>
            <person name="Lapidus A."/>
            <person name="Barry K."/>
            <person name="Detter J.C."/>
            <person name="Glavina T."/>
            <person name="Hammon N."/>
            <person name="Israni S."/>
            <person name="Pitluck S."/>
            <person name="Bryant D."/>
            <person name="Schmutz J."/>
            <person name="Larimer F."/>
            <person name="Land M."/>
            <person name="Kyrpides N."/>
            <person name="Ivanova N."/>
            <person name="Richardson P."/>
        </authorList>
    </citation>
    <scope>NUCLEOTIDE SEQUENCE [LARGE SCALE GENOMIC DNA]</scope>
    <source>
        <strain>DSM 273 / BCRC 81028 / 2530</strain>
    </source>
</reference>
<proteinExistence type="inferred from homology"/>
<gene>
    <name evidence="1" type="primary">rplW</name>
    <name type="ordered locus">Plut_0182</name>
</gene>
<name>RL23_CHLL3</name>
<organism>
    <name type="scientific">Chlorobium luteolum (strain DSM 273 / BCRC 81028 / 2530)</name>
    <name type="common">Pelodictyon luteolum</name>
    <dbReference type="NCBI Taxonomy" id="319225"/>
    <lineage>
        <taxon>Bacteria</taxon>
        <taxon>Pseudomonadati</taxon>
        <taxon>Chlorobiota</taxon>
        <taxon>Chlorobiia</taxon>
        <taxon>Chlorobiales</taxon>
        <taxon>Chlorobiaceae</taxon>
        <taxon>Chlorobium/Pelodictyon group</taxon>
        <taxon>Pelodictyon</taxon>
    </lineage>
</organism>
<sequence>MKNPLLRPWLTEKSTGLTEQKGQYVFQVKLDADKIDIRMAVEEKFGVEVKSVRTVNCLGKSRRQYTRKGLIAGKKNDWKKAIVTLREGQSIDYYSGAAPKGEG</sequence>